<reference key="1">
    <citation type="journal article" date="2015" name="Genome Announc.">
        <title>Genome sequence of Aspergillus flavus NRRL 3357, a strain that causes aflatoxin contamination of food and feed.</title>
        <authorList>
            <person name="Nierman W.C."/>
            <person name="Yu J."/>
            <person name="Fedorova-Abrams N.D."/>
            <person name="Losada L."/>
            <person name="Cleveland T.E."/>
            <person name="Bhatnagar D."/>
            <person name="Bennett J.W."/>
            <person name="Dean R."/>
            <person name="Payne G.A."/>
        </authorList>
    </citation>
    <scope>NUCLEOTIDE SEQUENCE [LARGE SCALE GENOMIC DNA]</scope>
    <source>
        <strain>ATCC 200026 / FGSC A1120 / IAM 13836 / NRRL 3357 / JCM 12722 / SRRC 167</strain>
    </source>
</reference>
<organism>
    <name type="scientific">Aspergillus flavus (strain ATCC 200026 / FGSC A1120 / IAM 13836 / NRRL 3357 / JCM 12722 / SRRC 167)</name>
    <dbReference type="NCBI Taxonomy" id="332952"/>
    <lineage>
        <taxon>Eukaryota</taxon>
        <taxon>Fungi</taxon>
        <taxon>Dikarya</taxon>
        <taxon>Ascomycota</taxon>
        <taxon>Pezizomycotina</taxon>
        <taxon>Eurotiomycetes</taxon>
        <taxon>Eurotiomycetidae</taxon>
        <taxon>Eurotiales</taxon>
        <taxon>Aspergillaceae</taxon>
        <taxon>Aspergillus</taxon>
        <taxon>Aspergillus subgen. Circumdati</taxon>
    </lineage>
</organism>
<comment type="function">
    <text evidence="1">Required for the post-translational delivery of tail-anchored (TA) proteins to the endoplasmic reticulum. Acts as a membrane receptor for soluble get3, which recognizes and selectively binds the transmembrane domain of TA proteins in the cytosol.</text>
</comment>
<comment type="subunit">
    <text evidence="1">Interacts with get3.</text>
</comment>
<comment type="subcellular location">
    <subcellularLocation>
        <location evidence="1">Endoplasmic reticulum membrane</location>
        <topology evidence="1">Multi-pass membrane protein</topology>
    </subcellularLocation>
</comment>
<comment type="similarity">
    <text evidence="1">Belongs to the WRB/GET1 family.</text>
</comment>
<comment type="sequence caution" evidence="2">
    <conflict type="erroneous gene model prediction">
        <sequence resource="EMBL-CDS" id="EED53985"/>
    </conflict>
</comment>
<protein>
    <recommendedName>
        <fullName evidence="1">Protein get1</fullName>
    </recommendedName>
    <alternativeName>
        <fullName evidence="1">Guided entry of tail-anchored proteins 1</fullName>
    </alternativeName>
</protein>
<accession>B8NA66</accession>
<name>GET1_ASPFN</name>
<keyword id="KW-0175">Coiled coil</keyword>
<keyword id="KW-0256">Endoplasmic reticulum</keyword>
<keyword id="KW-0472">Membrane</keyword>
<keyword id="KW-0812">Transmembrane</keyword>
<keyword id="KW-1133">Transmembrane helix</keyword>
<keyword id="KW-0813">Transport</keyword>
<feature type="chain" id="PRO_0000388576" description="Protein get1">
    <location>
        <begin position="1"/>
        <end position="196"/>
    </location>
</feature>
<feature type="topological domain" description="Lumenal" evidence="1">
    <location>
        <begin position="1"/>
        <end position="4"/>
    </location>
</feature>
<feature type="transmembrane region" description="Helical" evidence="1">
    <location>
        <begin position="5"/>
        <end position="24"/>
    </location>
</feature>
<feature type="topological domain" description="Cytoplasmic" evidence="1">
    <location>
        <begin position="25"/>
        <end position="110"/>
    </location>
</feature>
<feature type="transmembrane region" description="Helical" evidence="1">
    <location>
        <begin position="111"/>
        <end position="131"/>
    </location>
</feature>
<feature type="topological domain" description="Lumenal" evidence="1">
    <location>
        <begin position="132"/>
        <end position="155"/>
    </location>
</feature>
<feature type="transmembrane region" description="Helical" evidence="1">
    <location>
        <begin position="156"/>
        <end position="172"/>
    </location>
</feature>
<feature type="topological domain" description="Cytoplasmic" evidence="1">
    <location>
        <begin position="173"/>
        <end position="196"/>
    </location>
</feature>
<feature type="coiled-coil region" evidence="1">
    <location>
        <begin position="43"/>
        <end position="100"/>
    </location>
</feature>
<sequence length="196" mass="22574">MLSLIWTIFFLHVAIYVVNTAGASTIDSLLWLLYLKLPTSTSKNAREQSRLKREALELKRDMNNTSSQDEFAKWAKLRRRHDKTMDEYEQLNKTLTAQKSSFDWSVKIARWLSTNGLKIFLQFWYSKTPVFALPEAWIPYYVQWILSFPRAPMGSVSVHVWNSVCATAVSVTAEMVTSMFLQTARPTPVATAQKTQ</sequence>
<proteinExistence type="inferred from homology"/>
<gene>
    <name type="primary">get1</name>
    <name type="ORF">AFLA_113620</name>
</gene>
<evidence type="ECO:0000255" key="1">
    <source>
        <dbReference type="HAMAP-Rule" id="MF_03113"/>
    </source>
</evidence>
<evidence type="ECO:0000305" key="2"/>
<dbReference type="EMBL" id="EQ963475">
    <property type="protein sequence ID" value="EED53985.1"/>
    <property type="status" value="ALT_SEQ"/>
    <property type="molecule type" value="Genomic_DNA"/>
</dbReference>
<dbReference type="RefSeq" id="XP_002377231.1">
    <property type="nucleotide sequence ID" value="XM_002377190.1"/>
</dbReference>
<dbReference type="SMR" id="B8NA66"/>
<dbReference type="STRING" id="332952.B8NA66"/>
<dbReference type="EnsemblFungi" id="EED53985">
    <property type="protein sequence ID" value="EED53985"/>
    <property type="gene ID" value="AFLA_113620"/>
</dbReference>
<dbReference type="VEuPathDB" id="FungiDB:AFLA_007313"/>
<dbReference type="eggNOG" id="KOG4253">
    <property type="taxonomic scope" value="Eukaryota"/>
</dbReference>
<dbReference type="GO" id="GO:0005789">
    <property type="term" value="C:endoplasmic reticulum membrane"/>
    <property type="evidence" value="ECO:0007669"/>
    <property type="project" value="UniProtKB-SubCell"/>
</dbReference>
<dbReference type="GO" id="GO:0043529">
    <property type="term" value="C:GET complex"/>
    <property type="evidence" value="ECO:0007669"/>
    <property type="project" value="InterPro"/>
</dbReference>
<dbReference type="GO" id="GO:0043495">
    <property type="term" value="F:protein-membrane adaptor activity"/>
    <property type="evidence" value="ECO:0007669"/>
    <property type="project" value="TreeGrafter"/>
</dbReference>
<dbReference type="GO" id="GO:0071816">
    <property type="term" value="P:tail-anchored membrane protein insertion into ER membrane"/>
    <property type="evidence" value="ECO:0007669"/>
    <property type="project" value="InterPro"/>
</dbReference>
<dbReference type="FunFam" id="1.10.287.660:FF:000006">
    <property type="entry name" value="Protein GET1"/>
    <property type="match status" value="1"/>
</dbReference>
<dbReference type="Gene3D" id="1.10.287.660">
    <property type="entry name" value="Helix hairpin bin"/>
    <property type="match status" value="1"/>
</dbReference>
<dbReference type="HAMAP" id="MF_03113">
    <property type="entry name" value="Get1"/>
    <property type="match status" value="1"/>
</dbReference>
<dbReference type="InterPro" id="IPR028945">
    <property type="entry name" value="Get1"/>
</dbReference>
<dbReference type="InterPro" id="IPR027538">
    <property type="entry name" value="Get1_fungi"/>
</dbReference>
<dbReference type="InterPro" id="IPR029012">
    <property type="entry name" value="Helix_hairpin_bin_sf"/>
</dbReference>
<dbReference type="PANTHER" id="PTHR42650:SF1">
    <property type="entry name" value="GUIDED ENTRY OF TAIL-ANCHORED PROTEINS FACTOR 1"/>
    <property type="match status" value="1"/>
</dbReference>
<dbReference type="PANTHER" id="PTHR42650">
    <property type="entry name" value="TAIL-ANCHORED PROTEIN INSERTION RECEPTOR WRB"/>
    <property type="match status" value="1"/>
</dbReference>
<dbReference type="Pfam" id="PF04420">
    <property type="entry name" value="CHD5"/>
    <property type="match status" value="1"/>
</dbReference>